<reference key="1">
    <citation type="journal article" date="2002" name="J. Bacteriol.">
        <title>Genome sequence and analysis of the oral bacterium Fusobacterium nucleatum strain ATCC 25586.</title>
        <authorList>
            <person name="Kapatral V."/>
            <person name="Anderson I."/>
            <person name="Ivanova N."/>
            <person name="Reznik G."/>
            <person name="Los T."/>
            <person name="Lykidis A."/>
            <person name="Bhattacharyya A."/>
            <person name="Bartman A."/>
            <person name="Gardner W."/>
            <person name="Grechkin G."/>
            <person name="Zhu L."/>
            <person name="Vasieva O."/>
            <person name="Chu L."/>
            <person name="Kogan Y."/>
            <person name="Chaga O."/>
            <person name="Goltsman E."/>
            <person name="Bernal A."/>
            <person name="Larsen N."/>
            <person name="D'Souza M."/>
            <person name="Walunas T."/>
            <person name="Pusch G."/>
            <person name="Haselkorn R."/>
            <person name="Fonstein M."/>
            <person name="Kyrpides N.C."/>
            <person name="Overbeek R."/>
        </authorList>
    </citation>
    <scope>NUCLEOTIDE SEQUENCE [LARGE SCALE GENOMIC DNA]</scope>
    <source>
        <strain>ATCC 25586 / DSM 15643 / BCRC 10681 / CIP 101130 / JCM 8532 / KCTC 2640 / LMG 13131 / VPI 4355</strain>
    </source>
</reference>
<protein>
    <recommendedName>
        <fullName evidence="1">Ribosomal RNA large subunit methyltransferase H</fullName>
        <ecNumber evidence="1">2.1.1.177</ecNumber>
    </recommendedName>
    <alternativeName>
        <fullName evidence="1">23S rRNA (pseudouridine1915-N3)-methyltransferase</fullName>
    </alternativeName>
    <alternativeName>
        <fullName evidence="1">23S rRNA m3Psi1915 methyltransferase</fullName>
    </alternativeName>
    <alternativeName>
        <fullName evidence="1">rRNA (pseudouridine-N3-)-methyltransferase RlmH</fullName>
    </alternativeName>
</protein>
<comment type="function">
    <text evidence="1">Specifically methylates the pseudouridine at position 1915 (m3Psi1915) in 23S rRNA.</text>
</comment>
<comment type="catalytic activity">
    <reaction evidence="1">
        <text>pseudouridine(1915) in 23S rRNA + S-adenosyl-L-methionine = N(3)-methylpseudouridine(1915) in 23S rRNA + S-adenosyl-L-homocysteine + H(+)</text>
        <dbReference type="Rhea" id="RHEA:42752"/>
        <dbReference type="Rhea" id="RHEA-COMP:10221"/>
        <dbReference type="Rhea" id="RHEA-COMP:10222"/>
        <dbReference type="ChEBI" id="CHEBI:15378"/>
        <dbReference type="ChEBI" id="CHEBI:57856"/>
        <dbReference type="ChEBI" id="CHEBI:59789"/>
        <dbReference type="ChEBI" id="CHEBI:65314"/>
        <dbReference type="ChEBI" id="CHEBI:74486"/>
        <dbReference type="EC" id="2.1.1.177"/>
    </reaction>
</comment>
<comment type="subunit">
    <text evidence="1">Homodimer.</text>
</comment>
<comment type="subcellular location">
    <subcellularLocation>
        <location evidence="1">Cytoplasm</location>
    </subcellularLocation>
</comment>
<comment type="similarity">
    <text evidence="1">Belongs to the RNA methyltransferase RlmH family.</text>
</comment>
<accession>Q8RG55</accession>
<evidence type="ECO:0000255" key="1">
    <source>
        <dbReference type="HAMAP-Rule" id="MF_00658"/>
    </source>
</evidence>
<dbReference type="EC" id="2.1.1.177" evidence="1"/>
<dbReference type="EMBL" id="AE009951">
    <property type="protein sequence ID" value="AAL94659.1"/>
    <property type="molecule type" value="Genomic_DNA"/>
</dbReference>
<dbReference type="RefSeq" id="NP_603360.1">
    <property type="nucleotide sequence ID" value="NC_003454.1"/>
</dbReference>
<dbReference type="RefSeq" id="WP_011016410.1">
    <property type="nucleotide sequence ID" value="NZ_OZ209243.1"/>
</dbReference>
<dbReference type="SMR" id="Q8RG55"/>
<dbReference type="FunCoup" id="Q8RG55">
    <property type="interactions" value="159"/>
</dbReference>
<dbReference type="STRING" id="190304.FN0463"/>
<dbReference type="PaxDb" id="190304-FN0463"/>
<dbReference type="EnsemblBacteria" id="AAL94659">
    <property type="protein sequence ID" value="AAL94659"/>
    <property type="gene ID" value="FN0463"/>
</dbReference>
<dbReference type="KEGG" id="fnu:FN0463"/>
<dbReference type="PATRIC" id="fig|190304.8.peg.1033"/>
<dbReference type="eggNOG" id="COG1576">
    <property type="taxonomic scope" value="Bacteria"/>
</dbReference>
<dbReference type="HOGENOM" id="CLU_100552_0_0_0"/>
<dbReference type="InParanoid" id="Q8RG55"/>
<dbReference type="BioCyc" id="FNUC190304:G1FZS-1056-MONOMER"/>
<dbReference type="Proteomes" id="UP000002521">
    <property type="component" value="Chromosome"/>
</dbReference>
<dbReference type="GO" id="GO:0005737">
    <property type="term" value="C:cytoplasm"/>
    <property type="evidence" value="ECO:0007669"/>
    <property type="project" value="UniProtKB-SubCell"/>
</dbReference>
<dbReference type="GO" id="GO:0070038">
    <property type="term" value="F:rRNA (pseudouridine-N3-)-methyltransferase activity"/>
    <property type="evidence" value="ECO:0007669"/>
    <property type="project" value="UniProtKB-UniRule"/>
</dbReference>
<dbReference type="CDD" id="cd18081">
    <property type="entry name" value="RlmH-like"/>
    <property type="match status" value="1"/>
</dbReference>
<dbReference type="Gene3D" id="3.40.1280.10">
    <property type="match status" value="1"/>
</dbReference>
<dbReference type="HAMAP" id="MF_00658">
    <property type="entry name" value="23SrRNA_methyltr_H"/>
    <property type="match status" value="1"/>
</dbReference>
<dbReference type="InterPro" id="IPR029028">
    <property type="entry name" value="Alpha/beta_knot_MTases"/>
</dbReference>
<dbReference type="InterPro" id="IPR003742">
    <property type="entry name" value="RlmH-like"/>
</dbReference>
<dbReference type="InterPro" id="IPR029026">
    <property type="entry name" value="tRNA_m1G_MTases_N"/>
</dbReference>
<dbReference type="PANTHER" id="PTHR33603">
    <property type="entry name" value="METHYLTRANSFERASE"/>
    <property type="match status" value="1"/>
</dbReference>
<dbReference type="PANTHER" id="PTHR33603:SF1">
    <property type="entry name" value="RIBOSOMAL RNA LARGE SUBUNIT METHYLTRANSFERASE H"/>
    <property type="match status" value="1"/>
</dbReference>
<dbReference type="Pfam" id="PF02590">
    <property type="entry name" value="SPOUT_MTase"/>
    <property type="match status" value="1"/>
</dbReference>
<dbReference type="PIRSF" id="PIRSF004505">
    <property type="entry name" value="MT_bac"/>
    <property type="match status" value="1"/>
</dbReference>
<dbReference type="SUPFAM" id="SSF75217">
    <property type="entry name" value="alpha/beta knot"/>
    <property type="match status" value="1"/>
</dbReference>
<proteinExistence type="inferred from homology"/>
<keyword id="KW-0963">Cytoplasm</keyword>
<keyword id="KW-0489">Methyltransferase</keyword>
<keyword id="KW-1185">Reference proteome</keyword>
<keyword id="KW-0698">rRNA processing</keyword>
<keyword id="KW-0949">S-adenosyl-L-methionine</keyword>
<keyword id="KW-0808">Transferase</keyword>
<organism>
    <name type="scientific">Fusobacterium nucleatum subsp. nucleatum (strain ATCC 25586 / DSM 15643 / BCRC 10681 / CIP 101130 / JCM 8532 / KCTC 2640 / LMG 13131 / VPI 4355)</name>
    <dbReference type="NCBI Taxonomy" id="190304"/>
    <lineage>
        <taxon>Bacteria</taxon>
        <taxon>Fusobacteriati</taxon>
        <taxon>Fusobacteriota</taxon>
        <taxon>Fusobacteriia</taxon>
        <taxon>Fusobacteriales</taxon>
        <taxon>Fusobacteriaceae</taxon>
        <taxon>Fusobacterium</taxon>
    </lineage>
</organism>
<sequence length="155" mass="17954">MNINIICIGKIKDKYINDGIAEFSKRMTSFVSLNIIELKEYNKEDNINISIEKESLEILKQISKSNSYNILLDLEGKEINSENMSKYIENLKNIGISSINFIIGGSNGVSKNVKNSVDMKLKFSHFTFPHQLMRLILLEQVYRWFAISNNIKYHK</sequence>
<name>RLMH_FUSNN</name>
<gene>
    <name evidence="1" type="primary">rlmH</name>
    <name type="ordered locus">FN0463</name>
</gene>
<feature type="chain" id="PRO_0000198120" description="Ribosomal RNA large subunit methyltransferase H">
    <location>
        <begin position="1"/>
        <end position="155"/>
    </location>
</feature>
<feature type="binding site" evidence="1">
    <location>
        <position position="72"/>
    </location>
    <ligand>
        <name>S-adenosyl-L-methionine</name>
        <dbReference type="ChEBI" id="CHEBI:59789"/>
    </ligand>
</feature>
<feature type="binding site" evidence="1">
    <location>
        <position position="104"/>
    </location>
    <ligand>
        <name>S-adenosyl-L-methionine</name>
        <dbReference type="ChEBI" id="CHEBI:59789"/>
    </ligand>
</feature>